<dbReference type="EC" id="3.1.-.-" evidence="1"/>
<dbReference type="EMBL" id="CP000880">
    <property type="protein sequence ID" value="ABX22138.1"/>
    <property type="molecule type" value="Genomic_DNA"/>
</dbReference>
<dbReference type="SMR" id="A9MKB9"/>
<dbReference type="STRING" id="41514.SARI_02274"/>
<dbReference type="KEGG" id="ses:SARI_02274"/>
<dbReference type="HOGENOM" id="CLU_106710_0_1_6"/>
<dbReference type="Proteomes" id="UP000002084">
    <property type="component" value="Chromosome"/>
</dbReference>
<dbReference type="GO" id="GO:0005737">
    <property type="term" value="C:cytoplasm"/>
    <property type="evidence" value="ECO:0007669"/>
    <property type="project" value="UniProtKB-SubCell"/>
</dbReference>
<dbReference type="GO" id="GO:0004222">
    <property type="term" value="F:metalloendopeptidase activity"/>
    <property type="evidence" value="ECO:0007669"/>
    <property type="project" value="InterPro"/>
</dbReference>
<dbReference type="GO" id="GO:0004521">
    <property type="term" value="F:RNA endonuclease activity"/>
    <property type="evidence" value="ECO:0007669"/>
    <property type="project" value="UniProtKB-UniRule"/>
</dbReference>
<dbReference type="GO" id="GO:0008270">
    <property type="term" value="F:zinc ion binding"/>
    <property type="evidence" value="ECO:0007669"/>
    <property type="project" value="UniProtKB-UniRule"/>
</dbReference>
<dbReference type="GO" id="GO:0006364">
    <property type="term" value="P:rRNA processing"/>
    <property type="evidence" value="ECO:0007669"/>
    <property type="project" value="UniProtKB-UniRule"/>
</dbReference>
<dbReference type="Gene3D" id="3.40.390.30">
    <property type="entry name" value="Metalloproteases ('zincins'), catalytic domain"/>
    <property type="match status" value="1"/>
</dbReference>
<dbReference type="HAMAP" id="MF_00009">
    <property type="entry name" value="Endoribonucl_YbeY"/>
    <property type="match status" value="1"/>
</dbReference>
<dbReference type="InterPro" id="IPR023091">
    <property type="entry name" value="MetalPrtase_cat_dom_sf_prd"/>
</dbReference>
<dbReference type="InterPro" id="IPR002036">
    <property type="entry name" value="YbeY"/>
</dbReference>
<dbReference type="InterPro" id="IPR020549">
    <property type="entry name" value="YbeY_CS"/>
</dbReference>
<dbReference type="NCBIfam" id="TIGR00043">
    <property type="entry name" value="rRNA maturation RNase YbeY"/>
    <property type="match status" value="1"/>
</dbReference>
<dbReference type="PANTHER" id="PTHR46986">
    <property type="entry name" value="ENDORIBONUCLEASE YBEY, CHLOROPLASTIC"/>
    <property type="match status" value="1"/>
</dbReference>
<dbReference type="PANTHER" id="PTHR46986:SF1">
    <property type="entry name" value="ENDORIBONUCLEASE YBEY, CHLOROPLASTIC"/>
    <property type="match status" value="1"/>
</dbReference>
<dbReference type="Pfam" id="PF02130">
    <property type="entry name" value="YbeY"/>
    <property type="match status" value="1"/>
</dbReference>
<dbReference type="SUPFAM" id="SSF55486">
    <property type="entry name" value="Metalloproteases ('zincins'), catalytic domain"/>
    <property type="match status" value="1"/>
</dbReference>
<dbReference type="PROSITE" id="PS01306">
    <property type="entry name" value="UPF0054"/>
    <property type="match status" value="1"/>
</dbReference>
<reference key="1">
    <citation type="submission" date="2007-11" db="EMBL/GenBank/DDBJ databases">
        <authorList>
            <consortium name="The Salmonella enterica serovar Arizonae Genome Sequencing Project"/>
            <person name="McClelland M."/>
            <person name="Sanderson E.K."/>
            <person name="Porwollik S."/>
            <person name="Spieth J."/>
            <person name="Clifton W.S."/>
            <person name="Fulton R."/>
            <person name="Chunyan W."/>
            <person name="Wollam A."/>
            <person name="Shah N."/>
            <person name="Pepin K."/>
            <person name="Bhonagiri V."/>
            <person name="Nash W."/>
            <person name="Johnson M."/>
            <person name="Thiruvilangam P."/>
            <person name="Wilson R."/>
        </authorList>
    </citation>
    <scope>NUCLEOTIDE SEQUENCE [LARGE SCALE GENOMIC DNA]</scope>
    <source>
        <strain>ATCC BAA-731 / CDC346-86 / RSK2980</strain>
    </source>
</reference>
<proteinExistence type="inferred from homology"/>
<organism>
    <name type="scientific">Salmonella arizonae (strain ATCC BAA-731 / CDC346-86 / RSK2980)</name>
    <dbReference type="NCBI Taxonomy" id="41514"/>
    <lineage>
        <taxon>Bacteria</taxon>
        <taxon>Pseudomonadati</taxon>
        <taxon>Pseudomonadota</taxon>
        <taxon>Gammaproteobacteria</taxon>
        <taxon>Enterobacterales</taxon>
        <taxon>Enterobacteriaceae</taxon>
        <taxon>Salmonella</taxon>
    </lineage>
</organism>
<accession>A9MKB9</accession>
<sequence length="155" mass="17628">MSQVILDLQLACENHSGLPDEAQFQRWLDGVIPQFQEASEVTIRLVDEAESHDLNLTYRGKDKPTNVLSFPFEAPPGIEMPLLGDLIICRQVVEQEAQEQDKPLEAHWAHMVVHGSLHLLGYDHIDDDEAEEMESLETEIMLAMGYEDPYIAEKE</sequence>
<name>YBEY_SALAR</name>
<protein>
    <recommendedName>
        <fullName evidence="1">Endoribonuclease YbeY</fullName>
        <ecNumber evidence="1">3.1.-.-</ecNumber>
    </recommendedName>
</protein>
<feature type="chain" id="PRO_1000073916" description="Endoribonuclease YbeY">
    <location>
        <begin position="1"/>
        <end position="155"/>
    </location>
</feature>
<feature type="binding site" evidence="1">
    <location>
        <position position="114"/>
    </location>
    <ligand>
        <name>Zn(2+)</name>
        <dbReference type="ChEBI" id="CHEBI:29105"/>
        <note>catalytic</note>
    </ligand>
</feature>
<feature type="binding site" evidence="1">
    <location>
        <position position="118"/>
    </location>
    <ligand>
        <name>Zn(2+)</name>
        <dbReference type="ChEBI" id="CHEBI:29105"/>
        <note>catalytic</note>
    </ligand>
</feature>
<feature type="binding site" evidence="1">
    <location>
        <position position="124"/>
    </location>
    <ligand>
        <name>Zn(2+)</name>
        <dbReference type="ChEBI" id="CHEBI:29105"/>
        <note>catalytic</note>
    </ligand>
</feature>
<keyword id="KW-0963">Cytoplasm</keyword>
<keyword id="KW-0255">Endonuclease</keyword>
<keyword id="KW-0378">Hydrolase</keyword>
<keyword id="KW-0479">Metal-binding</keyword>
<keyword id="KW-0540">Nuclease</keyword>
<keyword id="KW-1185">Reference proteome</keyword>
<keyword id="KW-0690">Ribosome biogenesis</keyword>
<keyword id="KW-0698">rRNA processing</keyword>
<keyword id="KW-0862">Zinc</keyword>
<gene>
    <name evidence="1" type="primary">ybeY</name>
    <name type="ordered locus">SARI_02274</name>
</gene>
<evidence type="ECO:0000255" key="1">
    <source>
        <dbReference type="HAMAP-Rule" id="MF_00009"/>
    </source>
</evidence>
<comment type="function">
    <text evidence="1">Single strand-specific metallo-endoribonuclease involved in late-stage 70S ribosome quality control and in maturation of the 3' terminus of the 16S rRNA.</text>
</comment>
<comment type="cofactor">
    <cofactor evidence="1">
        <name>Zn(2+)</name>
        <dbReference type="ChEBI" id="CHEBI:29105"/>
    </cofactor>
    <text evidence="1">Binds 1 zinc ion.</text>
</comment>
<comment type="subcellular location">
    <subcellularLocation>
        <location evidence="1">Cytoplasm</location>
    </subcellularLocation>
</comment>
<comment type="similarity">
    <text evidence="1">Belongs to the endoribonuclease YbeY family.</text>
</comment>